<protein>
    <recommendedName>
        <fullName evidence="1">Hydroxyacylglutathione hydrolase</fullName>
        <ecNumber evidence="1">3.1.2.6</ecNumber>
    </recommendedName>
    <alternativeName>
        <fullName evidence="1">Glyoxalase II</fullName>
        <shortName evidence="1">Glx II</shortName>
    </alternativeName>
</protein>
<organism>
    <name type="scientific">Xanthomonas campestris pv. campestris (strain B100)</name>
    <dbReference type="NCBI Taxonomy" id="509169"/>
    <lineage>
        <taxon>Bacteria</taxon>
        <taxon>Pseudomonadati</taxon>
        <taxon>Pseudomonadota</taxon>
        <taxon>Gammaproteobacteria</taxon>
        <taxon>Lysobacterales</taxon>
        <taxon>Lysobacteraceae</taxon>
        <taxon>Xanthomonas</taxon>
    </lineage>
</organism>
<evidence type="ECO:0000255" key="1">
    <source>
        <dbReference type="HAMAP-Rule" id="MF_01374"/>
    </source>
</evidence>
<dbReference type="EC" id="3.1.2.6" evidence="1"/>
<dbReference type="EMBL" id="AM920689">
    <property type="protein sequence ID" value="CAP52738.1"/>
    <property type="molecule type" value="Genomic_DNA"/>
</dbReference>
<dbReference type="SMR" id="B0RTE9"/>
<dbReference type="KEGG" id="xca:xcc-b100_3373"/>
<dbReference type="HOGENOM" id="CLU_030571_4_1_6"/>
<dbReference type="UniPathway" id="UPA00619">
    <property type="reaction ID" value="UER00676"/>
</dbReference>
<dbReference type="Proteomes" id="UP000001188">
    <property type="component" value="Chromosome"/>
</dbReference>
<dbReference type="GO" id="GO:0004416">
    <property type="term" value="F:hydroxyacylglutathione hydrolase activity"/>
    <property type="evidence" value="ECO:0007669"/>
    <property type="project" value="UniProtKB-UniRule"/>
</dbReference>
<dbReference type="GO" id="GO:0046872">
    <property type="term" value="F:metal ion binding"/>
    <property type="evidence" value="ECO:0007669"/>
    <property type="project" value="UniProtKB-KW"/>
</dbReference>
<dbReference type="GO" id="GO:0019243">
    <property type="term" value="P:methylglyoxal catabolic process to D-lactate via S-lactoyl-glutathione"/>
    <property type="evidence" value="ECO:0007669"/>
    <property type="project" value="InterPro"/>
</dbReference>
<dbReference type="CDD" id="cd07723">
    <property type="entry name" value="hydroxyacylglutathione_hydrolase_MBL-fold"/>
    <property type="match status" value="1"/>
</dbReference>
<dbReference type="Gene3D" id="3.60.15.10">
    <property type="entry name" value="Ribonuclease Z/Hydroxyacylglutathione hydrolase-like"/>
    <property type="match status" value="1"/>
</dbReference>
<dbReference type="HAMAP" id="MF_01374">
    <property type="entry name" value="Glyoxalase_2"/>
    <property type="match status" value="1"/>
</dbReference>
<dbReference type="InterPro" id="IPR035680">
    <property type="entry name" value="Clx_II_MBL"/>
</dbReference>
<dbReference type="InterPro" id="IPR050110">
    <property type="entry name" value="Glyoxalase_II_hydrolase"/>
</dbReference>
<dbReference type="InterPro" id="IPR032282">
    <property type="entry name" value="HAGH_C"/>
</dbReference>
<dbReference type="InterPro" id="IPR017782">
    <property type="entry name" value="Hydroxyacylglutathione_Hdrlase"/>
</dbReference>
<dbReference type="InterPro" id="IPR001279">
    <property type="entry name" value="Metallo-B-lactamas"/>
</dbReference>
<dbReference type="InterPro" id="IPR036866">
    <property type="entry name" value="RibonucZ/Hydroxyglut_hydro"/>
</dbReference>
<dbReference type="NCBIfam" id="TIGR03413">
    <property type="entry name" value="GSH_gloB"/>
    <property type="match status" value="1"/>
</dbReference>
<dbReference type="PANTHER" id="PTHR43705">
    <property type="entry name" value="HYDROXYACYLGLUTATHIONE HYDROLASE"/>
    <property type="match status" value="1"/>
</dbReference>
<dbReference type="PANTHER" id="PTHR43705:SF1">
    <property type="entry name" value="HYDROXYACYLGLUTATHIONE HYDROLASE GLOB"/>
    <property type="match status" value="1"/>
</dbReference>
<dbReference type="Pfam" id="PF16123">
    <property type="entry name" value="HAGH_C"/>
    <property type="match status" value="1"/>
</dbReference>
<dbReference type="Pfam" id="PF00753">
    <property type="entry name" value="Lactamase_B"/>
    <property type="match status" value="1"/>
</dbReference>
<dbReference type="PIRSF" id="PIRSF005457">
    <property type="entry name" value="Glx"/>
    <property type="match status" value="1"/>
</dbReference>
<dbReference type="SMART" id="SM00849">
    <property type="entry name" value="Lactamase_B"/>
    <property type="match status" value="1"/>
</dbReference>
<dbReference type="SUPFAM" id="SSF56281">
    <property type="entry name" value="Metallo-hydrolase/oxidoreductase"/>
    <property type="match status" value="1"/>
</dbReference>
<sequence length="255" mass="27588">MRLTALPAFDDNYIWALVANDGRAVIVDPGQAAPVLEAAQREGFTPVAALLTHHHADHIGGVAELQQHFPALELYGPDDERMPSATRHVAHGDTVTALGIDFAVLEVPGHTRSHVAYVGDGHLFSGDTLFSLGCGRMFEGTPPQMFDALQRLASLPGETLVCCGHEYTLANAAFALHVDPTNAALQRRQQEAQAMRHAARPTLPISLKSELATNPFLRLHTPEIRAAAAAHASISITSDVDVFAELRRWKDAFRA</sequence>
<name>GLO2_XANCB</name>
<keyword id="KW-0378">Hydrolase</keyword>
<keyword id="KW-0479">Metal-binding</keyword>
<keyword id="KW-0862">Zinc</keyword>
<reference key="1">
    <citation type="journal article" date="2008" name="J. Biotechnol.">
        <title>The genome of Xanthomonas campestris pv. campestris B100 and its use for the reconstruction of metabolic pathways involved in xanthan biosynthesis.</title>
        <authorList>
            <person name="Vorhoelter F.-J."/>
            <person name="Schneiker S."/>
            <person name="Goesmann A."/>
            <person name="Krause L."/>
            <person name="Bekel T."/>
            <person name="Kaiser O."/>
            <person name="Linke B."/>
            <person name="Patschkowski T."/>
            <person name="Rueckert C."/>
            <person name="Schmid J."/>
            <person name="Sidhu V.K."/>
            <person name="Sieber V."/>
            <person name="Tauch A."/>
            <person name="Watt S.A."/>
            <person name="Weisshaar B."/>
            <person name="Becker A."/>
            <person name="Niehaus K."/>
            <person name="Puehler A."/>
        </authorList>
    </citation>
    <scope>NUCLEOTIDE SEQUENCE [LARGE SCALE GENOMIC DNA]</scope>
    <source>
        <strain>B100</strain>
    </source>
</reference>
<accession>B0RTE9</accession>
<feature type="chain" id="PRO_1000144820" description="Hydroxyacylglutathione hydrolase">
    <location>
        <begin position="1"/>
        <end position="255"/>
    </location>
</feature>
<feature type="binding site" evidence="1">
    <location>
        <position position="53"/>
    </location>
    <ligand>
        <name>Zn(2+)</name>
        <dbReference type="ChEBI" id="CHEBI:29105"/>
        <label>1</label>
    </ligand>
</feature>
<feature type="binding site" evidence="1">
    <location>
        <position position="55"/>
    </location>
    <ligand>
        <name>Zn(2+)</name>
        <dbReference type="ChEBI" id="CHEBI:29105"/>
        <label>1</label>
    </ligand>
</feature>
<feature type="binding site" evidence="1">
    <location>
        <position position="57"/>
    </location>
    <ligand>
        <name>Zn(2+)</name>
        <dbReference type="ChEBI" id="CHEBI:29105"/>
        <label>2</label>
    </ligand>
</feature>
<feature type="binding site" evidence="1">
    <location>
        <position position="58"/>
    </location>
    <ligand>
        <name>Zn(2+)</name>
        <dbReference type="ChEBI" id="CHEBI:29105"/>
        <label>2</label>
    </ligand>
</feature>
<feature type="binding site" evidence="1">
    <location>
        <position position="110"/>
    </location>
    <ligand>
        <name>Zn(2+)</name>
        <dbReference type="ChEBI" id="CHEBI:29105"/>
        <label>1</label>
    </ligand>
</feature>
<feature type="binding site" evidence="1">
    <location>
        <position position="127"/>
    </location>
    <ligand>
        <name>Zn(2+)</name>
        <dbReference type="ChEBI" id="CHEBI:29105"/>
        <label>1</label>
    </ligand>
</feature>
<feature type="binding site" evidence="1">
    <location>
        <position position="127"/>
    </location>
    <ligand>
        <name>Zn(2+)</name>
        <dbReference type="ChEBI" id="CHEBI:29105"/>
        <label>2</label>
    </ligand>
</feature>
<feature type="binding site" evidence="1">
    <location>
        <position position="165"/>
    </location>
    <ligand>
        <name>Zn(2+)</name>
        <dbReference type="ChEBI" id="CHEBI:29105"/>
        <label>2</label>
    </ligand>
</feature>
<gene>
    <name evidence="1" type="primary">gloB</name>
    <name type="ordered locus">xcc-b100_3373</name>
</gene>
<comment type="function">
    <text evidence="1">Thiolesterase that catalyzes the hydrolysis of S-D-lactoyl-glutathione to form glutathione and D-lactic acid.</text>
</comment>
<comment type="catalytic activity">
    <reaction evidence="1">
        <text>an S-(2-hydroxyacyl)glutathione + H2O = a 2-hydroxy carboxylate + glutathione + H(+)</text>
        <dbReference type="Rhea" id="RHEA:21864"/>
        <dbReference type="ChEBI" id="CHEBI:15377"/>
        <dbReference type="ChEBI" id="CHEBI:15378"/>
        <dbReference type="ChEBI" id="CHEBI:57925"/>
        <dbReference type="ChEBI" id="CHEBI:58896"/>
        <dbReference type="ChEBI" id="CHEBI:71261"/>
        <dbReference type="EC" id="3.1.2.6"/>
    </reaction>
</comment>
<comment type="cofactor">
    <cofactor evidence="1">
        <name>Zn(2+)</name>
        <dbReference type="ChEBI" id="CHEBI:29105"/>
    </cofactor>
    <text evidence="1">Binds 2 Zn(2+) ions per subunit.</text>
</comment>
<comment type="pathway">
    <text evidence="1">Secondary metabolite metabolism; methylglyoxal degradation; (R)-lactate from methylglyoxal: step 2/2.</text>
</comment>
<comment type="subunit">
    <text evidence="1">Monomer.</text>
</comment>
<comment type="similarity">
    <text evidence="1">Belongs to the metallo-beta-lactamase superfamily. Glyoxalase II family.</text>
</comment>
<proteinExistence type="inferred from homology"/>